<proteinExistence type="predicted"/>
<gene>
    <name type="primary">yxiC</name>
    <name type="synonym">J3C</name>
    <name type="ordered locus">BSU39310</name>
</gene>
<protein>
    <recommendedName>
        <fullName>Protein YxiC</fullName>
    </recommendedName>
</protein>
<keyword id="KW-1185">Reference proteome</keyword>
<accession>P42295</accession>
<dbReference type="EMBL" id="D31856">
    <property type="protein sequence ID" value="BAA06648.1"/>
    <property type="molecule type" value="Genomic_DNA"/>
</dbReference>
<dbReference type="EMBL" id="AL009126">
    <property type="protein sequence ID" value="CAB15967.1"/>
    <property type="molecule type" value="Genomic_DNA"/>
</dbReference>
<dbReference type="PIR" id="G70076">
    <property type="entry name" value="G70076"/>
</dbReference>
<dbReference type="RefSeq" id="NP_391810.1">
    <property type="nucleotide sequence ID" value="NC_000964.3"/>
</dbReference>
<dbReference type="RefSeq" id="WP_003244193.1">
    <property type="nucleotide sequence ID" value="NZ_OZ025638.1"/>
</dbReference>
<dbReference type="SMR" id="P42295"/>
<dbReference type="FunCoup" id="P42295">
    <property type="interactions" value="13"/>
</dbReference>
<dbReference type="STRING" id="224308.BSU39310"/>
<dbReference type="PaxDb" id="224308-BSU39310"/>
<dbReference type="EnsemblBacteria" id="CAB15967">
    <property type="protein sequence ID" value="CAB15967"/>
    <property type="gene ID" value="BSU_39310"/>
</dbReference>
<dbReference type="GeneID" id="937521"/>
<dbReference type="KEGG" id="bsu:BSU39310"/>
<dbReference type="PATRIC" id="fig|224308.179.peg.4255"/>
<dbReference type="eggNOG" id="ENOG5032ZHK">
    <property type="taxonomic scope" value="Bacteria"/>
</dbReference>
<dbReference type="InParanoid" id="P42295"/>
<dbReference type="OrthoDB" id="2455619at2"/>
<dbReference type="BioCyc" id="BSUB:BSU39310-MONOMER"/>
<dbReference type="Proteomes" id="UP000001570">
    <property type="component" value="Chromosome"/>
</dbReference>
<dbReference type="InterPro" id="IPR046318">
    <property type="entry name" value="DUF5344"/>
</dbReference>
<dbReference type="Pfam" id="PF17279">
    <property type="entry name" value="DUF5344"/>
    <property type="match status" value="1"/>
</dbReference>
<organism>
    <name type="scientific">Bacillus subtilis (strain 168)</name>
    <dbReference type="NCBI Taxonomy" id="224308"/>
    <lineage>
        <taxon>Bacteria</taxon>
        <taxon>Bacillati</taxon>
        <taxon>Bacillota</taxon>
        <taxon>Bacilli</taxon>
        <taxon>Bacillales</taxon>
        <taxon>Bacillaceae</taxon>
        <taxon>Bacillus</taxon>
    </lineage>
</organism>
<evidence type="ECO:0000269" key="1">
    <source>
    </source>
</evidence>
<feature type="chain" id="PRO_0000050022" description="Protein YxiC">
    <location>
        <begin position="1"/>
        <end position="89"/>
    </location>
</feature>
<name>YXIC_BACSU</name>
<sequence length="89" mass="9800">MAQEIKMVYDTVKQGLSQLKNSAELKSSLPGHLSGRNHLNVVKSIEQLNKDIKELTEAYASVLAKHIAQTESAVNAMKETDENISSSMK</sequence>
<comment type="disruption phenotype">
    <text evidence="1">Deletion of the yxiB-yxiC-yxiD-yxxD-yxxE operon has no visible growth phenotype, however it is out-competed by wild-type cells.</text>
</comment>
<reference key="1">
    <citation type="journal article" date="1995" name="Microbiology">
        <title>Cloning and sequencing of a 29 kb region of the Bacillus subtilis genome containing the hut and wapA loci.</title>
        <authorList>
            <person name="Yoshida K."/>
            <person name="Sano H."/>
            <person name="Seki S."/>
            <person name="Oda M."/>
            <person name="Fujimura M."/>
            <person name="Fujita Y."/>
        </authorList>
    </citation>
    <scope>NUCLEOTIDE SEQUENCE [GENOMIC DNA]</scope>
    <source>
        <strain>168 / BGSC1A1</strain>
    </source>
</reference>
<reference key="2">
    <citation type="journal article" date="1997" name="Nature">
        <title>The complete genome sequence of the Gram-positive bacterium Bacillus subtilis.</title>
        <authorList>
            <person name="Kunst F."/>
            <person name="Ogasawara N."/>
            <person name="Moszer I."/>
            <person name="Albertini A.M."/>
            <person name="Alloni G."/>
            <person name="Azevedo V."/>
            <person name="Bertero M.G."/>
            <person name="Bessieres P."/>
            <person name="Bolotin A."/>
            <person name="Borchert S."/>
            <person name="Borriss R."/>
            <person name="Boursier L."/>
            <person name="Brans A."/>
            <person name="Braun M."/>
            <person name="Brignell S.C."/>
            <person name="Bron S."/>
            <person name="Brouillet S."/>
            <person name="Bruschi C.V."/>
            <person name="Caldwell B."/>
            <person name="Capuano V."/>
            <person name="Carter N.M."/>
            <person name="Choi S.-K."/>
            <person name="Codani J.-J."/>
            <person name="Connerton I.F."/>
            <person name="Cummings N.J."/>
            <person name="Daniel R.A."/>
            <person name="Denizot F."/>
            <person name="Devine K.M."/>
            <person name="Duesterhoeft A."/>
            <person name="Ehrlich S.D."/>
            <person name="Emmerson P.T."/>
            <person name="Entian K.-D."/>
            <person name="Errington J."/>
            <person name="Fabret C."/>
            <person name="Ferrari E."/>
            <person name="Foulger D."/>
            <person name="Fritz C."/>
            <person name="Fujita M."/>
            <person name="Fujita Y."/>
            <person name="Fuma S."/>
            <person name="Galizzi A."/>
            <person name="Galleron N."/>
            <person name="Ghim S.-Y."/>
            <person name="Glaser P."/>
            <person name="Goffeau A."/>
            <person name="Golightly E.J."/>
            <person name="Grandi G."/>
            <person name="Guiseppi G."/>
            <person name="Guy B.J."/>
            <person name="Haga K."/>
            <person name="Haiech J."/>
            <person name="Harwood C.R."/>
            <person name="Henaut A."/>
            <person name="Hilbert H."/>
            <person name="Holsappel S."/>
            <person name="Hosono S."/>
            <person name="Hullo M.-F."/>
            <person name="Itaya M."/>
            <person name="Jones L.-M."/>
            <person name="Joris B."/>
            <person name="Karamata D."/>
            <person name="Kasahara Y."/>
            <person name="Klaerr-Blanchard M."/>
            <person name="Klein C."/>
            <person name="Kobayashi Y."/>
            <person name="Koetter P."/>
            <person name="Koningstein G."/>
            <person name="Krogh S."/>
            <person name="Kumano M."/>
            <person name="Kurita K."/>
            <person name="Lapidus A."/>
            <person name="Lardinois S."/>
            <person name="Lauber J."/>
            <person name="Lazarevic V."/>
            <person name="Lee S.-M."/>
            <person name="Levine A."/>
            <person name="Liu H."/>
            <person name="Masuda S."/>
            <person name="Mauel C."/>
            <person name="Medigue C."/>
            <person name="Medina N."/>
            <person name="Mellado R.P."/>
            <person name="Mizuno M."/>
            <person name="Moestl D."/>
            <person name="Nakai S."/>
            <person name="Noback M."/>
            <person name="Noone D."/>
            <person name="O'Reilly M."/>
            <person name="Ogawa K."/>
            <person name="Ogiwara A."/>
            <person name="Oudega B."/>
            <person name="Park S.-H."/>
            <person name="Parro V."/>
            <person name="Pohl T.M."/>
            <person name="Portetelle D."/>
            <person name="Porwollik S."/>
            <person name="Prescott A.M."/>
            <person name="Presecan E."/>
            <person name="Pujic P."/>
            <person name="Purnelle B."/>
            <person name="Rapoport G."/>
            <person name="Rey M."/>
            <person name="Reynolds S."/>
            <person name="Rieger M."/>
            <person name="Rivolta C."/>
            <person name="Rocha E."/>
            <person name="Roche B."/>
            <person name="Rose M."/>
            <person name="Sadaie Y."/>
            <person name="Sato T."/>
            <person name="Scanlan E."/>
            <person name="Schleich S."/>
            <person name="Schroeter R."/>
            <person name="Scoffone F."/>
            <person name="Sekiguchi J."/>
            <person name="Sekowska A."/>
            <person name="Seror S.J."/>
            <person name="Serror P."/>
            <person name="Shin B.-S."/>
            <person name="Soldo B."/>
            <person name="Sorokin A."/>
            <person name="Tacconi E."/>
            <person name="Takagi T."/>
            <person name="Takahashi H."/>
            <person name="Takemaru K."/>
            <person name="Takeuchi M."/>
            <person name="Tamakoshi A."/>
            <person name="Tanaka T."/>
            <person name="Terpstra P."/>
            <person name="Tognoni A."/>
            <person name="Tosato V."/>
            <person name="Uchiyama S."/>
            <person name="Vandenbol M."/>
            <person name="Vannier F."/>
            <person name="Vassarotti A."/>
            <person name="Viari A."/>
            <person name="Wambutt R."/>
            <person name="Wedler E."/>
            <person name="Wedler H."/>
            <person name="Weitzenegger T."/>
            <person name="Winters P."/>
            <person name="Wipat A."/>
            <person name="Yamamoto H."/>
            <person name="Yamane K."/>
            <person name="Yasumoto K."/>
            <person name="Yata K."/>
            <person name="Yoshida K."/>
            <person name="Yoshikawa H.-F."/>
            <person name="Zumstein E."/>
            <person name="Yoshikawa H."/>
            <person name="Danchin A."/>
        </authorList>
    </citation>
    <scope>NUCLEOTIDE SEQUENCE [LARGE SCALE GENOMIC DNA]</scope>
    <source>
        <strain>168</strain>
    </source>
</reference>
<reference key="3">
    <citation type="journal article" date="2021" name="PLoS Genet.">
        <title>Diverse LXG toxin and antitoxin systems specifically mediate intraspecies competition in Bacillus subtilis biofilms.</title>
        <authorList>
            <person name="Kobayashi K."/>
        </authorList>
    </citation>
    <scope>DISRUPTION PHENOTYPE</scope>
    <source>
        <strain>168 / Marburg / ATCC 6051 / DSM 10 / JCM 1465 / NBRC 13719 / NCIMB 3610 / NRRL NRS-744 / VKM B-501</strain>
    </source>
</reference>